<proteinExistence type="inferred from homology"/>
<organism>
    <name type="scientific">Nitrosomonas europaea (strain ATCC 19718 / CIP 103999 / KCTC 2705 / NBRC 14298)</name>
    <dbReference type="NCBI Taxonomy" id="228410"/>
    <lineage>
        <taxon>Bacteria</taxon>
        <taxon>Pseudomonadati</taxon>
        <taxon>Pseudomonadota</taxon>
        <taxon>Betaproteobacteria</taxon>
        <taxon>Nitrosomonadales</taxon>
        <taxon>Nitrosomonadaceae</taxon>
        <taxon>Nitrosomonas</taxon>
    </lineage>
</organism>
<evidence type="ECO:0000255" key="1">
    <source>
        <dbReference type="HAMAP-Rule" id="MF_00178"/>
    </source>
</evidence>
<name>RISB_NITEU</name>
<sequence>MSYYDNILEIDSNLDGNGLCIGIVMSRFNIDVSEGLLGACTAELTRLGVQEADIVLTTVPGALEIPVALQKLAESDRFDALIALGAVIRGETYHFEVVANESARGLAAVGREYNIPIANGILTTDDEDQATARMAEKGGETARVAIEMANLVLTLDEMDQSAPT</sequence>
<keyword id="KW-1185">Reference proteome</keyword>
<keyword id="KW-0686">Riboflavin biosynthesis</keyword>
<keyword id="KW-0808">Transferase</keyword>
<protein>
    <recommendedName>
        <fullName evidence="1">6,7-dimethyl-8-ribityllumazine synthase</fullName>
        <shortName evidence="1">DMRL synthase</shortName>
        <shortName evidence="1">LS</shortName>
        <shortName evidence="1">Lumazine synthase</shortName>
        <ecNumber evidence="1">2.5.1.78</ecNumber>
    </recommendedName>
</protein>
<gene>
    <name evidence="1" type="primary">ribH</name>
    <name type="ordered locus">NE2557</name>
</gene>
<accession>Q82S08</accession>
<reference key="1">
    <citation type="journal article" date="2003" name="J. Bacteriol.">
        <title>Complete genome sequence of the ammonia-oxidizing bacterium and obligate chemolithoautotroph Nitrosomonas europaea.</title>
        <authorList>
            <person name="Chain P."/>
            <person name="Lamerdin J.E."/>
            <person name="Larimer F.W."/>
            <person name="Regala W."/>
            <person name="Lao V."/>
            <person name="Land M.L."/>
            <person name="Hauser L."/>
            <person name="Hooper A.B."/>
            <person name="Klotz M.G."/>
            <person name="Norton J."/>
            <person name="Sayavedra-Soto L.A."/>
            <person name="Arciero D.M."/>
            <person name="Hommes N.G."/>
            <person name="Whittaker M.M."/>
            <person name="Arp D.J."/>
        </authorList>
    </citation>
    <scope>NUCLEOTIDE SEQUENCE [LARGE SCALE GENOMIC DNA]</scope>
    <source>
        <strain>ATCC 19718 / CIP 103999 / KCTC 2705 / NBRC 14298</strain>
    </source>
</reference>
<feature type="chain" id="PRO_0000134776" description="6,7-dimethyl-8-ribityllumazine synthase">
    <location>
        <begin position="1"/>
        <end position="164"/>
    </location>
</feature>
<feature type="active site" description="Proton donor" evidence="1">
    <location>
        <position position="94"/>
    </location>
</feature>
<feature type="binding site" evidence="1">
    <location>
        <position position="28"/>
    </location>
    <ligand>
        <name>5-amino-6-(D-ribitylamino)uracil</name>
        <dbReference type="ChEBI" id="CHEBI:15934"/>
    </ligand>
</feature>
<feature type="binding site" evidence="1">
    <location>
        <begin position="62"/>
        <end position="64"/>
    </location>
    <ligand>
        <name>5-amino-6-(D-ribitylamino)uracil</name>
        <dbReference type="ChEBI" id="CHEBI:15934"/>
    </ligand>
</feature>
<feature type="binding site" evidence="1">
    <location>
        <begin position="86"/>
        <end position="88"/>
    </location>
    <ligand>
        <name>5-amino-6-(D-ribitylamino)uracil</name>
        <dbReference type="ChEBI" id="CHEBI:15934"/>
    </ligand>
</feature>
<feature type="binding site" evidence="1">
    <location>
        <begin position="91"/>
        <end position="92"/>
    </location>
    <ligand>
        <name>(2S)-2-hydroxy-3-oxobutyl phosphate</name>
        <dbReference type="ChEBI" id="CHEBI:58830"/>
    </ligand>
</feature>
<feature type="binding site" evidence="1">
    <location>
        <position position="119"/>
    </location>
    <ligand>
        <name>5-amino-6-(D-ribitylamino)uracil</name>
        <dbReference type="ChEBI" id="CHEBI:15934"/>
    </ligand>
</feature>
<feature type="binding site" evidence="1">
    <location>
        <position position="133"/>
    </location>
    <ligand>
        <name>(2S)-2-hydroxy-3-oxobutyl phosphate</name>
        <dbReference type="ChEBI" id="CHEBI:58830"/>
    </ligand>
</feature>
<comment type="function">
    <text evidence="1">Catalyzes the formation of 6,7-dimethyl-8-ribityllumazine by condensation of 5-amino-6-(D-ribitylamino)uracil with 3,4-dihydroxy-2-butanone 4-phosphate. This is the penultimate step in the biosynthesis of riboflavin.</text>
</comment>
<comment type="catalytic activity">
    <reaction evidence="1">
        <text>(2S)-2-hydroxy-3-oxobutyl phosphate + 5-amino-6-(D-ribitylamino)uracil = 6,7-dimethyl-8-(1-D-ribityl)lumazine + phosphate + 2 H2O + H(+)</text>
        <dbReference type="Rhea" id="RHEA:26152"/>
        <dbReference type="ChEBI" id="CHEBI:15377"/>
        <dbReference type="ChEBI" id="CHEBI:15378"/>
        <dbReference type="ChEBI" id="CHEBI:15934"/>
        <dbReference type="ChEBI" id="CHEBI:43474"/>
        <dbReference type="ChEBI" id="CHEBI:58201"/>
        <dbReference type="ChEBI" id="CHEBI:58830"/>
        <dbReference type="EC" id="2.5.1.78"/>
    </reaction>
</comment>
<comment type="pathway">
    <text evidence="1">Cofactor biosynthesis; riboflavin biosynthesis; riboflavin from 2-hydroxy-3-oxobutyl phosphate and 5-amino-6-(D-ribitylamino)uracil: step 1/2.</text>
</comment>
<comment type="similarity">
    <text evidence="1">Belongs to the DMRL synthase family.</text>
</comment>
<dbReference type="EC" id="2.5.1.78" evidence="1"/>
<dbReference type="EMBL" id="AL954747">
    <property type="protein sequence ID" value="CAD86469.1"/>
    <property type="molecule type" value="Genomic_DNA"/>
</dbReference>
<dbReference type="RefSeq" id="WP_011113010.1">
    <property type="nucleotide sequence ID" value="NC_004757.1"/>
</dbReference>
<dbReference type="SMR" id="Q82S08"/>
<dbReference type="STRING" id="228410.NE2557"/>
<dbReference type="GeneID" id="87105685"/>
<dbReference type="KEGG" id="neu:NE2557"/>
<dbReference type="eggNOG" id="COG0054">
    <property type="taxonomic scope" value="Bacteria"/>
</dbReference>
<dbReference type="HOGENOM" id="CLU_089358_1_2_4"/>
<dbReference type="OrthoDB" id="9809709at2"/>
<dbReference type="PhylomeDB" id="Q82S08"/>
<dbReference type="UniPathway" id="UPA00275">
    <property type="reaction ID" value="UER00404"/>
</dbReference>
<dbReference type="Proteomes" id="UP000001416">
    <property type="component" value="Chromosome"/>
</dbReference>
<dbReference type="GO" id="GO:0005829">
    <property type="term" value="C:cytosol"/>
    <property type="evidence" value="ECO:0007669"/>
    <property type="project" value="TreeGrafter"/>
</dbReference>
<dbReference type="GO" id="GO:0009349">
    <property type="term" value="C:riboflavin synthase complex"/>
    <property type="evidence" value="ECO:0007669"/>
    <property type="project" value="InterPro"/>
</dbReference>
<dbReference type="GO" id="GO:0000906">
    <property type="term" value="F:6,7-dimethyl-8-ribityllumazine synthase activity"/>
    <property type="evidence" value="ECO:0007669"/>
    <property type="project" value="UniProtKB-UniRule"/>
</dbReference>
<dbReference type="GO" id="GO:0009231">
    <property type="term" value="P:riboflavin biosynthetic process"/>
    <property type="evidence" value="ECO:0007669"/>
    <property type="project" value="UniProtKB-UniRule"/>
</dbReference>
<dbReference type="CDD" id="cd09209">
    <property type="entry name" value="Lumazine_synthase-I"/>
    <property type="match status" value="1"/>
</dbReference>
<dbReference type="Gene3D" id="3.40.50.960">
    <property type="entry name" value="Lumazine/riboflavin synthase"/>
    <property type="match status" value="1"/>
</dbReference>
<dbReference type="HAMAP" id="MF_00178">
    <property type="entry name" value="Lumazine_synth"/>
    <property type="match status" value="1"/>
</dbReference>
<dbReference type="InterPro" id="IPR034964">
    <property type="entry name" value="LS"/>
</dbReference>
<dbReference type="InterPro" id="IPR002180">
    <property type="entry name" value="LS/RS"/>
</dbReference>
<dbReference type="InterPro" id="IPR036467">
    <property type="entry name" value="LS/RS_sf"/>
</dbReference>
<dbReference type="NCBIfam" id="TIGR00114">
    <property type="entry name" value="lumazine-synth"/>
    <property type="match status" value="1"/>
</dbReference>
<dbReference type="PANTHER" id="PTHR21058:SF0">
    <property type="entry name" value="6,7-DIMETHYL-8-RIBITYLLUMAZINE SYNTHASE"/>
    <property type="match status" value="1"/>
</dbReference>
<dbReference type="PANTHER" id="PTHR21058">
    <property type="entry name" value="6,7-DIMETHYL-8-RIBITYLLUMAZINE SYNTHASE DMRL SYNTHASE LUMAZINE SYNTHASE"/>
    <property type="match status" value="1"/>
</dbReference>
<dbReference type="Pfam" id="PF00885">
    <property type="entry name" value="DMRL_synthase"/>
    <property type="match status" value="1"/>
</dbReference>
<dbReference type="SUPFAM" id="SSF52121">
    <property type="entry name" value="Lumazine synthase"/>
    <property type="match status" value="1"/>
</dbReference>